<sequence length="50" mass="5918">MNIHTYHHLLFPSLVFHQSSDVPNALSLHIHTYEYIIVVIDPFRITLAFR</sequence>
<feature type="peptide" id="PRO_0000433202" description="Peptide encoded by miPEP319a">
    <location>
        <begin position="1"/>
        <end position="50"/>
    </location>
</feature>
<name>P319A_ARATH</name>
<dbReference type="EMBL" id="AL035394">
    <property type="status" value="NOT_ANNOTATED_CDS"/>
    <property type="molecule type" value="Genomic_DNA"/>
</dbReference>
<dbReference type="EMBL" id="CP002687">
    <property type="status" value="NOT_ANNOTATED_CDS"/>
    <property type="molecule type" value="Genomic_DNA"/>
</dbReference>
<dbReference type="Araport" id="AT4G23712"/>
<dbReference type="TAIR" id="AT4G23712"/>
<dbReference type="InParanoid" id="P0DKJ2"/>
<dbReference type="PRO" id="PR:P0DKJ2"/>
<dbReference type="Proteomes" id="UP000006548">
    <property type="component" value="Chromosome 4"/>
</dbReference>
<dbReference type="GO" id="GO:1902895">
    <property type="term" value="P:positive regulation of miRNA transcription"/>
    <property type="evidence" value="ECO:0000314"/>
    <property type="project" value="GO_Central"/>
</dbReference>
<protein>
    <recommendedName>
        <fullName evidence="2">Peptide encoded by miPEP319a</fullName>
    </recommendedName>
</protein>
<proteinExistence type="predicted"/>
<organism>
    <name type="scientific">Arabidopsis thaliana</name>
    <name type="common">Mouse-ear cress</name>
    <dbReference type="NCBI Taxonomy" id="3702"/>
    <lineage>
        <taxon>Eukaryota</taxon>
        <taxon>Viridiplantae</taxon>
        <taxon>Streptophyta</taxon>
        <taxon>Embryophyta</taxon>
        <taxon>Tracheophyta</taxon>
        <taxon>Spermatophyta</taxon>
        <taxon>Magnoliopsida</taxon>
        <taxon>eudicotyledons</taxon>
        <taxon>Gunneridae</taxon>
        <taxon>Pentapetalae</taxon>
        <taxon>rosids</taxon>
        <taxon>malvids</taxon>
        <taxon>Brassicales</taxon>
        <taxon>Brassicaceae</taxon>
        <taxon>Camelineae</taxon>
        <taxon>Arabidopsis</taxon>
    </lineage>
</organism>
<comment type="function">
    <text evidence="1">Regulatory peptide encoded by the primary transcript (pri-miR319a) of the microRNA miR319a that enhances the accumulation of its corresponding mature miRNA. Acts probably as a transcriptional activator of its corresponding pri-miRNA.</text>
</comment>
<gene>
    <name evidence="2" type="primary">miPEP319a</name>
    <name evidence="3" type="ordered locus">At4g23712</name>
    <name evidence="4" type="ORF">F9D16</name>
</gene>
<accession>P0DKJ2</accession>
<reference key="1">
    <citation type="journal article" date="1999" name="Nature">
        <title>Sequence and analysis of chromosome 4 of the plant Arabidopsis thaliana.</title>
        <authorList>
            <person name="Mayer K.F.X."/>
            <person name="Schueller C."/>
            <person name="Wambutt R."/>
            <person name="Murphy G."/>
            <person name="Volckaert G."/>
            <person name="Pohl T."/>
            <person name="Duesterhoeft A."/>
            <person name="Stiekema W."/>
            <person name="Entian K.-D."/>
            <person name="Terryn N."/>
            <person name="Harris B."/>
            <person name="Ansorge W."/>
            <person name="Brandt P."/>
            <person name="Grivell L.A."/>
            <person name="Rieger M."/>
            <person name="Weichselgartner M."/>
            <person name="de Simone V."/>
            <person name="Obermaier B."/>
            <person name="Mache R."/>
            <person name="Mueller M."/>
            <person name="Kreis M."/>
            <person name="Delseny M."/>
            <person name="Puigdomenech P."/>
            <person name="Watson M."/>
            <person name="Schmidtheini T."/>
            <person name="Reichert B."/>
            <person name="Portetelle D."/>
            <person name="Perez-Alonso M."/>
            <person name="Boutry M."/>
            <person name="Bancroft I."/>
            <person name="Vos P."/>
            <person name="Hoheisel J."/>
            <person name="Zimmermann W."/>
            <person name="Wedler H."/>
            <person name="Ridley P."/>
            <person name="Langham S.-A."/>
            <person name="McCullagh B."/>
            <person name="Bilham L."/>
            <person name="Robben J."/>
            <person name="van der Schueren J."/>
            <person name="Grymonprez B."/>
            <person name="Chuang Y.-J."/>
            <person name="Vandenbussche F."/>
            <person name="Braeken M."/>
            <person name="Weltjens I."/>
            <person name="Voet M."/>
            <person name="Bastiaens I."/>
            <person name="Aert R."/>
            <person name="Defoor E."/>
            <person name="Weitzenegger T."/>
            <person name="Bothe G."/>
            <person name="Ramsperger U."/>
            <person name="Hilbert H."/>
            <person name="Braun M."/>
            <person name="Holzer E."/>
            <person name="Brandt A."/>
            <person name="Peters S."/>
            <person name="van Staveren M."/>
            <person name="Dirkse W."/>
            <person name="Mooijman P."/>
            <person name="Klein Lankhorst R."/>
            <person name="Rose M."/>
            <person name="Hauf J."/>
            <person name="Koetter P."/>
            <person name="Berneiser S."/>
            <person name="Hempel S."/>
            <person name="Feldpausch M."/>
            <person name="Lamberth S."/>
            <person name="Van den Daele H."/>
            <person name="De Keyser A."/>
            <person name="Buysshaert C."/>
            <person name="Gielen J."/>
            <person name="Villarroel R."/>
            <person name="De Clercq R."/>
            <person name="van Montagu M."/>
            <person name="Rogers J."/>
            <person name="Cronin A."/>
            <person name="Quail M.A."/>
            <person name="Bray-Allen S."/>
            <person name="Clark L."/>
            <person name="Doggett J."/>
            <person name="Hall S."/>
            <person name="Kay M."/>
            <person name="Lennard N."/>
            <person name="McLay K."/>
            <person name="Mayes R."/>
            <person name="Pettett A."/>
            <person name="Rajandream M.A."/>
            <person name="Lyne M."/>
            <person name="Benes V."/>
            <person name="Rechmann S."/>
            <person name="Borkova D."/>
            <person name="Bloecker H."/>
            <person name="Scharfe M."/>
            <person name="Grimm M."/>
            <person name="Loehnert T.-H."/>
            <person name="Dose S."/>
            <person name="de Haan M."/>
            <person name="Maarse A.C."/>
            <person name="Schaefer M."/>
            <person name="Mueller-Auer S."/>
            <person name="Gabel C."/>
            <person name="Fuchs M."/>
            <person name="Fartmann B."/>
            <person name="Granderath K."/>
            <person name="Dauner D."/>
            <person name="Herzl A."/>
            <person name="Neumann S."/>
            <person name="Argiriou A."/>
            <person name="Vitale D."/>
            <person name="Liguori R."/>
            <person name="Piravandi E."/>
            <person name="Massenet O."/>
            <person name="Quigley F."/>
            <person name="Clabauld G."/>
            <person name="Muendlein A."/>
            <person name="Felber R."/>
            <person name="Schnabl S."/>
            <person name="Hiller R."/>
            <person name="Schmidt W."/>
            <person name="Lecharny A."/>
            <person name="Aubourg S."/>
            <person name="Chefdor F."/>
            <person name="Cooke R."/>
            <person name="Berger C."/>
            <person name="Monfort A."/>
            <person name="Casacuberta E."/>
            <person name="Gibbons T."/>
            <person name="Weber N."/>
            <person name="Vandenbol M."/>
            <person name="Bargues M."/>
            <person name="Terol J."/>
            <person name="Torres A."/>
            <person name="Perez-Perez A."/>
            <person name="Purnelle B."/>
            <person name="Bent E."/>
            <person name="Johnson S."/>
            <person name="Tacon D."/>
            <person name="Jesse T."/>
            <person name="Heijnen L."/>
            <person name="Schwarz S."/>
            <person name="Scholler P."/>
            <person name="Heber S."/>
            <person name="Francs P."/>
            <person name="Bielke C."/>
            <person name="Frishman D."/>
            <person name="Haase D."/>
            <person name="Lemcke K."/>
            <person name="Mewes H.-W."/>
            <person name="Stocker S."/>
            <person name="Zaccaria P."/>
            <person name="Bevan M."/>
            <person name="Wilson R.K."/>
            <person name="de la Bastide M."/>
            <person name="Habermann K."/>
            <person name="Parnell L."/>
            <person name="Dedhia N."/>
            <person name="Gnoj L."/>
            <person name="Schutz K."/>
            <person name="Huang E."/>
            <person name="Spiegel L."/>
            <person name="Sekhon M."/>
            <person name="Murray J."/>
            <person name="Sheet P."/>
            <person name="Cordes M."/>
            <person name="Abu-Threideh J."/>
            <person name="Stoneking T."/>
            <person name="Kalicki J."/>
            <person name="Graves T."/>
            <person name="Harmon G."/>
            <person name="Edwards J."/>
            <person name="Latreille P."/>
            <person name="Courtney L."/>
            <person name="Cloud J."/>
            <person name="Abbott A."/>
            <person name="Scott K."/>
            <person name="Johnson D."/>
            <person name="Minx P."/>
            <person name="Bentley D."/>
            <person name="Fulton B."/>
            <person name="Miller N."/>
            <person name="Greco T."/>
            <person name="Kemp K."/>
            <person name="Kramer J."/>
            <person name="Fulton L."/>
            <person name="Mardis E."/>
            <person name="Dante M."/>
            <person name="Pepin K."/>
            <person name="Hillier L.W."/>
            <person name="Nelson J."/>
            <person name="Spieth J."/>
            <person name="Ryan E."/>
            <person name="Andrews S."/>
            <person name="Geisel C."/>
            <person name="Layman D."/>
            <person name="Du H."/>
            <person name="Ali J."/>
            <person name="Berghoff A."/>
            <person name="Jones K."/>
            <person name="Drone K."/>
            <person name="Cotton M."/>
            <person name="Joshu C."/>
            <person name="Antonoiu B."/>
            <person name="Zidanic M."/>
            <person name="Strong C."/>
            <person name="Sun H."/>
            <person name="Lamar B."/>
            <person name="Yordan C."/>
            <person name="Ma P."/>
            <person name="Zhong J."/>
            <person name="Preston R."/>
            <person name="Vil D."/>
            <person name="Shekher M."/>
            <person name="Matero A."/>
            <person name="Shah R."/>
            <person name="Swaby I.K."/>
            <person name="O'Shaughnessy A."/>
            <person name="Rodriguez M."/>
            <person name="Hoffman J."/>
            <person name="Till S."/>
            <person name="Granat S."/>
            <person name="Shohdy N."/>
            <person name="Hasegawa A."/>
            <person name="Hameed A."/>
            <person name="Lodhi M."/>
            <person name="Johnson A."/>
            <person name="Chen E."/>
            <person name="Marra M.A."/>
            <person name="Martienssen R."/>
            <person name="McCombie W.R."/>
        </authorList>
    </citation>
    <scope>NUCLEOTIDE SEQUENCE [LARGE SCALE GENOMIC DNA]</scope>
    <source>
        <strain>cv. Columbia</strain>
    </source>
</reference>
<reference key="2">
    <citation type="journal article" date="2017" name="Plant J.">
        <title>Araport11: a complete reannotation of the Arabidopsis thaliana reference genome.</title>
        <authorList>
            <person name="Cheng C.Y."/>
            <person name="Krishnakumar V."/>
            <person name="Chan A.P."/>
            <person name="Thibaud-Nissen F."/>
            <person name="Schobel S."/>
            <person name="Town C.D."/>
        </authorList>
    </citation>
    <scope>GENOME REANNOTATION</scope>
    <source>
        <strain>cv. Columbia</strain>
    </source>
</reference>
<reference key="3">
    <citation type="journal article" date="2015" name="Nature">
        <title>Primary transcripts of microRNAs encode regulatory peptides.</title>
        <authorList>
            <person name="Lauressergues D."/>
            <person name="Couzigou J.M."/>
            <person name="Clemente H.S."/>
            <person name="Martinez Y."/>
            <person name="Dunand C."/>
            <person name="Becard G."/>
            <person name="Combier J.P."/>
        </authorList>
    </citation>
    <scope>IDENTIFICATION</scope>
    <scope>FUNCTION</scope>
    <source>
        <strain>cv. Columbia</strain>
    </source>
</reference>
<keyword id="KW-0010">Activator</keyword>
<keyword id="KW-1185">Reference proteome</keyword>
<keyword id="KW-0804">Transcription</keyword>
<keyword id="KW-0805">Transcription regulation</keyword>
<evidence type="ECO:0000269" key="1">
    <source>
    </source>
</evidence>
<evidence type="ECO:0000303" key="2">
    <source>
    </source>
</evidence>
<evidence type="ECO:0000305" key="3"/>
<evidence type="ECO:0000312" key="4">
    <source>
        <dbReference type="EMBL" id="AL035394"/>
    </source>
</evidence>